<comment type="function">
    <text evidence="1">Converts 2C-methyl-D-erythritol 2,4-cyclodiphosphate (ME-2,4cPP) into 1-hydroxy-2-methyl-2-(E)-butenyl 4-diphosphate.</text>
</comment>
<comment type="catalytic activity">
    <reaction evidence="1">
        <text>(2E)-4-hydroxy-3-methylbut-2-enyl diphosphate + oxidized [flavodoxin] + H2O + 2 H(+) = 2-C-methyl-D-erythritol 2,4-cyclic diphosphate + reduced [flavodoxin]</text>
        <dbReference type="Rhea" id="RHEA:43604"/>
        <dbReference type="Rhea" id="RHEA-COMP:10622"/>
        <dbReference type="Rhea" id="RHEA-COMP:10623"/>
        <dbReference type="ChEBI" id="CHEBI:15377"/>
        <dbReference type="ChEBI" id="CHEBI:15378"/>
        <dbReference type="ChEBI" id="CHEBI:57618"/>
        <dbReference type="ChEBI" id="CHEBI:58210"/>
        <dbReference type="ChEBI" id="CHEBI:58483"/>
        <dbReference type="ChEBI" id="CHEBI:128753"/>
        <dbReference type="EC" id="1.17.7.3"/>
    </reaction>
</comment>
<comment type="cofactor">
    <cofactor evidence="1">
        <name>[4Fe-4S] cluster</name>
        <dbReference type="ChEBI" id="CHEBI:49883"/>
    </cofactor>
    <text evidence="1">Binds 1 [4Fe-4S] cluster.</text>
</comment>
<comment type="pathway">
    <text evidence="1">Isoprenoid biosynthesis; isopentenyl diphosphate biosynthesis via DXP pathway; isopentenyl diphosphate from 1-deoxy-D-xylulose 5-phosphate: step 5/6.</text>
</comment>
<comment type="similarity">
    <text evidence="1">Belongs to the IspG family.</text>
</comment>
<gene>
    <name evidence="1" type="primary">ispG</name>
    <name type="ordered locus">SeHA_C2781</name>
</gene>
<sequence length="372" mass="40626">MHNQAPIQRRKSTRIYVGNVPIGDGAPIAVQSMTNTRTTDVEATVNQIKALERVGADIVRVSVPTMDAAEAFKLIKQQVNVPLVADIHFDYRIALKVAEYGVDCLRINPGNIGNEERIRMVVDCARDKNIPIRIGVNAGSLEKDLQEKYGEPTPQALLESAMRHVDHLDRLNFDQFKVSVKASDVFLAVESYRLLAKQIDQPLHLGITEAGGARSGAVKSAIGLGLLLSEGIGDTLRVSLAADPVEEIKVGFDILKSLRIRARGINFIACPTCSRQEFDVIGTVNALEQRLEDIITPMDVSIIGCVVNGPGEALVSTLGVTGGNKKSGLYEDGVRKDRLDNDDMIAQLESRIRAKASQLDEARRIDVLQVEK</sequence>
<keyword id="KW-0004">4Fe-4S</keyword>
<keyword id="KW-0408">Iron</keyword>
<keyword id="KW-0411">Iron-sulfur</keyword>
<keyword id="KW-0414">Isoprene biosynthesis</keyword>
<keyword id="KW-0479">Metal-binding</keyword>
<keyword id="KW-0560">Oxidoreductase</keyword>
<proteinExistence type="inferred from homology"/>
<name>ISPG_SALHS</name>
<protein>
    <recommendedName>
        <fullName evidence="1">4-hydroxy-3-methylbut-2-en-1-yl diphosphate synthase (flavodoxin)</fullName>
        <ecNumber evidence="1">1.17.7.3</ecNumber>
    </recommendedName>
    <alternativeName>
        <fullName evidence="1">1-hydroxy-2-methyl-2-(E)-butenyl 4-diphosphate synthase</fullName>
    </alternativeName>
</protein>
<accession>B4TD93</accession>
<feature type="chain" id="PRO_1000097182" description="4-hydroxy-3-methylbut-2-en-1-yl diphosphate synthase (flavodoxin)">
    <location>
        <begin position="1"/>
        <end position="372"/>
    </location>
</feature>
<feature type="binding site" evidence="1">
    <location>
        <position position="270"/>
    </location>
    <ligand>
        <name>[4Fe-4S] cluster</name>
        <dbReference type="ChEBI" id="CHEBI:49883"/>
    </ligand>
</feature>
<feature type="binding site" evidence="1">
    <location>
        <position position="273"/>
    </location>
    <ligand>
        <name>[4Fe-4S] cluster</name>
        <dbReference type="ChEBI" id="CHEBI:49883"/>
    </ligand>
</feature>
<feature type="binding site" evidence="1">
    <location>
        <position position="305"/>
    </location>
    <ligand>
        <name>[4Fe-4S] cluster</name>
        <dbReference type="ChEBI" id="CHEBI:49883"/>
    </ligand>
</feature>
<feature type="binding site" evidence="1">
    <location>
        <position position="312"/>
    </location>
    <ligand>
        <name>[4Fe-4S] cluster</name>
        <dbReference type="ChEBI" id="CHEBI:49883"/>
    </ligand>
</feature>
<evidence type="ECO:0000255" key="1">
    <source>
        <dbReference type="HAMAP-Rule" id="MF_00159"/>
    </source>
</evidence>
<organism>
    <name type="scientific">Salmonella heidelberg (strain SL476)</name>
    <dbReference type="NCBI Taxonomy" id="454169"/>
    <lineage>
        <taxon>Bacteria</taxon>
        <taxon>Pseudomonadati</taxon>
        <taxon>Pseudomonadota</taxon>
        <taxon>Gammaproteobacteria</taxon>
        <taxon>Enterobacterales</taxon>
        <taxon>Enterobacteriaceae</taxon>
        <taxon>Salmonella</taxon>
    </lineage>
</organism>
<reference key="1">
    <citation type="journal article" date="2011" name="J. Bacteriol.">
        <title>Comparative genomics of 28 Salmonella enterica isolates: evidence for CRISPR-mediated adaptive sublineage evolution.</title>
        <authorList>
            <person name="Fricke W.F."/>
            <person name="Mammel M.K."/>
            <person name="McDermott P.F."/>
            <person name="Tartera C."/>
            <person name="White D.G."/>
            <person name="Leclerc J.E."/>
            <person name="Ravel J."/>
            <person name="Cebula T.A."/>
        </authorList>
    </citation>
    <scope>NUCLEOTIDE SEQUENCE [LARGE SCALE GENOMIC DNA]</scope>
    <source>
        <strain>SL476</strain>
    </source>
</reference>
<dbReference type="EC" id="1.17.7.3" evidence="1"/>
<dbReference type="EMBL" id="CP001120">
    <property type="protein sequence ID" value="ACF66143.1"/>
    <property type="molecule type" value="Genomic_DNA"/>
</dbReference>
<dbReference type="RefSeq" id="WP_000551804.1">
    <property type="nucleotide sequence ID" value="NC_011083.1"/>
</dbReference>
<dbReference type="SMR" id="B4TD93"/>
<dbReference type="KEGG" id="seh:SeHA_C2781"/>
<dbReference type="HOGENOM" id="CLU_042258_0_0_6"/>
<dbReference type="UniPathway" id="UPA00056">
    <property type="reaction ID" value="UER00096"/>
</dbReference>
<dbReference type="Proteomes" id="UP000001866">
    <property type="component" value="Chromosome"/>
</dbReference>
<dbReference type="GO" id="GO:0051539">
    <property type="term" value="F:4 iron, 4 sulfur cluster binding"/>
    <property type="evidence" value="ECO:0007669"/>
    <property type="project" value="UniProtKB-UniRule"/>
</dbReference>
<dbReference type="GO" id="GO:0046429">
    <property type="term" value="F:4-hydroxy-3-methylbut-2-en-1-yl diphosphate synthase activity (ferredoxin)"/>
    <property type="evidence" value="ECO:0007669"/>
    <property type="project" value="UniProtKB-UniRule"/>
</dbReference>
<dbReference type="GO" id="GO:0141197">
    <property type="term" value="F:4-hydroxy-3-methylbut-2-enyl-diphosphate synthase activity (flavodoxin)"/>
    <property type="evidence" value="ECO:0007669"/>
    <property type="project" value="UniProtKB-EC"/>
</dbReference>
<dbReference type="GO" id="GO:0005506">
    <property type="term" value="F:iron ion binding"/>
    <property type="evidence" value="ECO:0007669"/>
    <property type="project" value="InterPro"/>
</dbReference>
<dbReference type="GO" id="GO:0019288">
    <property type="term" value="P:isopentenyl diphosphate biosynthetic process, methylerythritol 4-phosphate pathway"/>
    <property type="evidence" value="ECO:0007669"/>
    <property type="project" value="UniProtKB-UniRule"/>
</dbReference>
<dbReference type="GO" id="GO:0016114">
    <property type="term" value="P:terpenoid biosynthetic process"/>
    <property type="evidence" value="ECO:0007669"/>
    <property type="project" value="InterPro"/>
</dbReference>
<dbReference type="FunFam" id="3.20.20.20:FF:000001">
    <property type="entry name" value="4-hydroxy-3-methylbut-2-en-1-yl diphosphate synthase (flavodoxin)"/>
    <property type="match status" value="1"/>
</dbReference>
<dbReference type="FunFam" id="3.30.413.10:FF:000002">
    <property type="entry name" value="4-hydroxy-3-methylbut-2-en-1-yl diphosphate synthase (flavodoxin)"/>
    <property type="match status" value="1"/>
</dbReference>
<dbReference type="Gene3D" id="3.20.20.20">
    <property type="entry name" value="Dihydropteroate synthase-like"/>
    <property type="match status" value="1"/>
</dbReference>
<dbReference type="Gene3D" id="3.30.413.10">
    <property type="entry name" value="Sulfite Reductase Hemoprotein, domain 1"/>
    <property type="match status" value="1"/>
</dbReference>
<dbReference type="HAMAP" id="MF_00159">
    <property type="entry name" value="IspG"/>
    <property type="match status" value="1"/>
</dbReference>
<dbReference type="InterPro" id="IPR011005">
    <property type="entry name" value="Dihydropteroate_synth-like_sf"/>
</dbReference>
<dbReference type="InterPro" id="IPR016425">
    <property type="entry name" value="IspG_bac"/>
</dbReference>
<dbReference type="InterPro" id="IPR004588">
    <property type="entry name" value="IspG_bac-typ"/>
</dbReference>
<dbReference type="InterPro" id="IPR045854">
    <property type="entry name" value="NO2/SO3_Rdtase_4Fe4S_sf"/>
</dbReference>
<dbReference type="NCBIfam" id="TIGR00612">
    <property type="entry name" value="ispG_gcpE"/>
    <property type="match status" value="1"/>
</dbReference>
<dbReference type="NCBIfam" id="NF001540">
    <property type="entry name" value="PRK00366.1"/>
    <property type="match status" value="1"/>
</dbReference>
<dbReference type="PANTHER" id="PTHR30454">
    <property type="entry name" value="4-HYDROXY-3-METHYLBUT-2-EN-1-YL DIPHOSPHATE SYNTHASE"/>
    <property type="match status" value="1"/>
</dbReference>
<dbReference type="PANTHER" id="PTHR30454:SF0">
    <property type="entry name" value="4-HYDROXY-3-METHYLBUT-2-EN-1-YL DIPHOSPHATE SYNTHASE (FERREDOXIN), CHLOROPLASTIC"/>
    <property type="match status" value="1"/>
</dbReference>
<dbReference type="Pfam" id="PF04551">
    <property type="entry name" value="GcpE"/>
    <property type="match status" value="1"/>
</dbReference>
<dbReference type="PIRSF" id="PIRSF004640">
    <property type="entry name" value="IspG"/>
    <property type="match status" value="1"/>
</dbReference>
<dbReference type="SUPFAM" id="SSF51717">
    <property type="entry name" value="Dihydropteroate synthetase-like"/>
    <property type="match status" value="1"/>
</dbReference>
<dbReference type="SUPFAM" id="SSF56014">
    <property type="entry name" value="Nitrite and sulphite reductase 4Fe-4S domain-like"/>
    <property type="match status" value="1"/>
</dbReference>